<feature type="chain" id="PRO_1000165598" description="Small ribosomal subunit protein uS13">
    <location>
        <begin position="1"/>
        <end position="121"/>
    </location>
</feature>
<feature type="region of interest" description="Disordered" evidence="2">
    <location>
        <begin position="91"/>
        <end position="121"/>
    </location>
</feature>
<feature type="compositionally biased region" description="Basic residues" evidence="2">
    <location>
        <begin position="106"/>
        <end position="121"/>
    </location>
</feature>
<protein>
    <recommendedName>
        <fullName evidence="1">Small ribosomal subunit protein uS13</fullName>
    </recommendedName>
    <alternativeName>
        <fullName evidence="3">30S ribosomal protein S13</fullName>
    </alternativeName>
</protein>
<comment type="function">
    <text evidence="1">Located at the top of the head of the 30S subunit, it contacts several helices of the 16S rRNA. In the 70S ribosome it contacts the 23S rRNA (bridge B1a) and protein L5 of the 50S subunit (bridge B1b), connecting the 2 subunits; these bridges are implicated in subunit movement. Contacts the tRNAs in the A and P-sites.</text>
</comment>
<comment type="subunit">
    <text evidence="1">Part of the 30S ribosomal subunit. Forms a loose heterodimer with protein S19. Forms two bridges to the 50S subunit in the 70S ribosome.</text>
</comment>
<comment type="similarity">
    <text evidence="1">Belongs to the universal ribosomal protein uS13 family.</text>
</comment>
<dbReference type="EMBL" id="CP001598">
    <property type="protein sequence ID" value="ACQ48384.1"/>
    <property type="molecule type" value="Genomic_DNA"/>
</dbReference>
<dbReference type="RefSeq" id="WP_000090788.1">
    <property type="nucleotide sequence ID" value="NC_012659.1"/>
</dbReference>
<dbReference type="SMR" id="C3P9T0"/>
<dbReference type="GeneID" id="93010918"/>
<dbReference type="KEGG" id="bai:BAA_0151"/>
<dbReference type="HOGENOM" id="CLU_103849_1_1_9"/>
<dbReference type="GO" id="GO:0005829">
    <property type="term" value="C:cytosol"/>
    <property type="evidence" value="ECO:0007669"/>
    <property type="project" value="TreeGrafter"/>
</dbReference>
<dbReference type="GO" id="GO:0015935">
    <property type="term" value="C:small ribosomal subunit"/>
    <property type="evidence" value="ECO:0007669"/>
    <property type="project" value="TreeGrafter"/>
</dbReference>
<dbReference type="GO" id="GO:0019843">
    <property type="term" value="F:rRNA binding"/>
    <property type="evidence" value="ECO:0007669"/>
    <property type="project" value="UniProtKB-UniRule"/>
</dbReference>
<dbReference type="GO" id="GO:0003735">
    <property type="term" value="F:structural constituent of ribosome"/>
    <property type="evidence" value="ECO:0007669"/>
    <property type="project" value="InterPro"/>
</dbReference>
<dbReference type="GO" id="GO:0000049">
    <property type="term" value="F:tRNA binding"/>
    <property type="evidence" value="ECO:0007669"/>
    <property type="project" value="UniProtKB-UniRule"/>
</dbReference>
<dbReference type="GO" id="GO:0006412">
    <property type="term" value="P:translation"/>
    <property type="evidence" value="ECO:0007669"/>
    <property type="project" value="UniProtKB-UniRule"/>
</dbReference>
<dbReference type="FunFam" id="1.10.8.50:FF:000001">
    <property type="entry name" value="30S ribosomal protein S13"/>
    <property type="match status" value="1"/>
</dbReference>
<dbReference type="FunFam" id="4.10.910.10:FF:000001">
    <property type="entry name" value="30S ribosomal protein S13"/>
    <property type="match status" value="1"/>
</dbReference>
<dbReference type="Gene3D" id="1.10.8.50">
    <property type="match status" value="1"/>
</dbReference>
<dbReference type="Gene3D" id="4.10.910.10">
    <property type="entry name" value="30s ribosomal protein s13, domain 2"/>
    <property type="match status" value="1"/>
</dbReference>
<dbReference type="HAMAP" id="MF_01315">
    <property type="entry name" value="Ribosomal_uS13"/>
    <property type="match status" value="1"/>
</dbReference>
<dbReference type="InterPro" id="IPR027437">
    <property type="entry name" value="Rbsml_uS13_C"/>
</dbReference>
<dbReference type="InterPro" id="IPR001892">
    <property type="entry name" value="Ribosomal_uS13"/>
</dbReference>
<dbReference type="InterPro" id="IPR010979">
    <property type="entry name" value="Ribosomal_uS13-like_H2TH"/>
</dbReference>
<dbReference type="InterPro" id="IPR019980">
    <property type="entry name" value="Ribosomal_uS13_bac-type"/>
</dbReference>
<dbReference type="InterPro" id="IPR018269">
    <property type="entry name" value="Ribosomal_uS13_CS"/>
</dbReference>
<dbReference type="NCBIfam" id="TIGR03631">
    <property type="entry name" value="uS13_bact"/>
    <property type="match status" value="1"/>
</dbReference>
<dbReference type="PANTHER" id="PTHR10871">
    <property type="entry name" value="30S RIBOSOMAL PROTEIN S13/40S RIBOSOMAL PROTEIN S18"/>
    <property type="match status" value="1"/>
</dbReference>
<dbReference type="PANTHER" id="PTHR10871:SF1">
    <property type="entry name" value="SMALL RIBOSOMAL SUBUNIT PROTEIN US13M"/>
    <property type="match status" value="1"/>
</dbReference>
<dbReference type="Pfam" id="PF00416">
    <property type="entry name" value="Ribosomal_S13"/>
    <property type="match status" value="1"/>
</dbReference>
<dbReference type="PIRSF" id="PIRSF002134">
    <property type="entry name" value="Ribosomal_S13"/>
    <property type="match status" value="1"/>
</dbReference>
<dbReference type="SUPFAM" id="SSF46946">
    <property type="entry name" value="S13-like H2TH domain"/>
    <property type="match status" value="1"/>
</dbReference>
<dbReference type="PROSITE" id="PS00646">
    <property type="entry name" value="RIBOSOMAL_S13_1"/>
    <property type="match status" value="1"/>
</dbReference>
<dbReference type="PROSITE" id="PS50159">
    <property type="entry name" value="RIBOSOMAL_S13_2"/>
    <property type="match status" value="1"/>
</dbReference>
<name>RS13_BACAA</name>
<sequence>MARIAGVDIPRDKRVVISLTYVFGIGRTTAEKILAEAGISEETRVRDLTEDELGRIRDIIDRIKVEGDLRREVSLNIKRLMEIGSYRGLRHRRGLPVRGQNSKNNARTRKGPRRTVANKKK</sequence>
<reference key="1">
    <citation type="submission" date="2009-04" db="EMBL/GenBank/DDBJ databases">
        <title>Genome sequence of Bacillus anthracis A0248.</title>
        <authorList>
            <person name="Dodson R.J."/>
            <person name="Munk A.C."/>
            <person name="Bruce D."/>
            <person name="Detter C."/>
            <person name="Tapia R."/>
            <person name="Sutton G."/>
            <person name="Sims D."/>
            <person name="Brettin T."/>
        </authorList>
    </citation>
    <scope>NUCLEOTIDE SEQUENCE [LARGE SCALE GENOMIC DNA]</scope>
    <source>
        <strain>A0248</strain>
    </source>
</reference>
<keyword id="KW-0687">Ribonucleoprotein</keyword>
<keyword id="KW-0689">Ribosomal protein</keyword>
<keyword id="KW-0694">RNA-binding</keyword>
<keyword id="KW-0699">rRNA-binding</keyword>
<keyword id="KW-0820">tRNA-binding</keyword>
<gene>
    <name evidence="1" type="primary">rpsM</name>
    <name type="ordered locus">BAA_0151</name>
</gene>
<proteinExistence type="inferred from homology"/>
<organism>
    <name type="scientific">Bacillus anthracis (strain A0248)</name>
    <dbReference type="NCBI Taxonomy" id="592021"/>
    <lineage>
        <taxon>Bacteria</taxon>
        <taxon>Bacillati</taxon>
        <taxon>Bacillota</taxon>
        <taxon>Bacilli</taxon>
        <taxon>Bacillales</taxon>
        <taxon>Bacillaceae</taxon>
        <taxon>Bacillus</taxon>
        <taxon>Bacillus cereus group</taxon>
    </lineage>
</organism>
<accession>C3P9T0</accession>
<evidence type="ECO:0000255" key="1">
    <source>
        <dbReference type="HAMAP-Rule" id="MF_01315"/>
    </source>
</evidence>
<evidence type="ECO:0000256" key="2">
    <source>
        <dbReference type="SAM" id="MobiDB-lite"/>
    </source>
</evidence>
<evidence type="ECO:0000305" key="3"/>